<keyword id="KW-0678">Repressor</keyword>
<keyword id="KW-0687">Ribonucleoprotein</keyword>
<keyword id="KW-0689">Ribosomal protein</keyword>
<keyword id="KW-0694">RNA-binding</keyword>
<keyword id="KW-0699">rRNA-binding</keyword>
<keyword id="KW-0810">Translation regulation</keyword>
<keyword id="KW-0820">tRNA-binding</keyword>
<reference key="1">
    <citation type="journal article" date="2008" name="PLoS ONE">
        <title>A recalibrated molecular clock and independent origins for the cholera pandemic clones.</title>
        <authorList>
            <person name="Feng L."/>
            <person name="Reeves P.R."/>
            <person name="Lan R."/>
            <person name="Ren Y."/>
            <person name="Gao C."/>
            <person name="Zhou Z."/>
            <person name="Ren Y."/>
            <person name="Cheng J."/>
            <person name="Wang W."/>
            <person name="Wang J."/>
            <person name="Qian W."/>
            <person name="Li D."/>
            <person name="Wang L."/>
        </authorList>
    </citation>
    <scope>NUCLEOTIDE SEQUENCE [LARGE SCALE GENOMIC DNA]</scope>
    <source>
        <strain>M66-2</strain>
    </source>
</reference>
<proteinExistence type="inferred from homology"/>
<sequence>MAKLTKRMRTIRAKVDVTKEYDINEAVALLKELATAKFVESVDVAVNLGIDARKSDQNVRGATVLPHGTGRDIRVAVFTQGANAEAAKAAGAELVGMEDLADLVKKGEMNFDVVIASPDAMRVVGQLGTILGPRGLMPNPKVGTVTPNVAEAVKNAKAGQVRYRNDKNGIIHTTIGKVTFEADQLKENLEALLVALKKAKPSSAKGVFVKKVSISTTMGAGVAVDQNTLSAQV</sequence>
<accession>C3LR57</accession>
<gene>
    <name evidence="1" type="primary">rplA</name>
    <name type="ordered locus">VCM66_0309</name>
</gene>
<name>RL1_VIBCM</name>
<evidence type="ECO:0000255" key="1">
    <source>
        <dbReference type="HAMAP-Rule" id="MF_01318"/>
    </source>
</evidence>
<evidence type="ECO:0000305" key="2"/>
<dbReference type="EMBL" id="CP001233">
    <property type="protein sequence ID" value="ACP04637.1"/>
    <property type="molecule type" value="Genomic_DNA"/>
</dbReference>
<dbReference type="RefSeq" id="WP_001096669.1">
    <property type="nucleotide sequence ID" value="NC_012578.1"/>
</dbReference>
<dbReference type="SMR" id="C3LR57"/>
<dbReference type="GeneID" id="88783728"/>
<dbReference type="KEGG" id="vcm:VCM66_0309"/>
<dbReference type="HOGENOM" id="CLU_062853_0_0_6"/>
<dbReference type="Proteomes" id="UP000001217">
    <property type="component" value="Chromosome I"/>
</dbReference>
<dbReference type="GO" id="GO:0022625">
    <property type="term" value="C:cytosolic large ribosomal subunit"/>
    <property type="evidence" value="ECO:0007669"/>
    <property type="project" value="TreeGrafter"/>
</dbReference>
<dbReference type="GO" id="GO:0019843">
    <property type="term" value="F:rRNA binding"/>
    <property type="evidence" value="ECO:0007669"/>
    <property type="project" value="UniProtKB-UniRule"/>
</dbReference>
<dbReference type="GO" id="GO:0003735">
    <property type="term" value="F:structural constituent of ribosome"/>
    <property type="evidence" value="ECO:0007669"/>
    <property type="project" value="InterPro"/>
</dbReference>
<dbReference type="GO" id="GO:0000049">
    <property type="term" value="F:tRNA binding"/>
    <property type="evidence" value="ECO:0007669"/>
    <property type="project" value="UniProtKB-KW"/>
</dbReference>
<dbReference type="GO" id="GO:0006417">
    <property type="term" value="P:regulation of translation"/>
    <property type="evidence" value="ECO:0007669"/>
    <property type="project" value="UniProtKB-KW"/>
</dbReference>
<dbReference type="GO" id="GO:0006412">
    <property type="term" value="P:translation"/>
    <property type="evidence" value="ECO:0007669"/>
    <property type="project" value="UniProtKB-UniRule"/>
</dbReference>
<dbReference type="CDD" id="cd00403">
    <property type="entry name" value="Ribosomal_L1"/>
    <property type="match status" value="1"/>
</dbReference>
<dbReference type="FunFam" id="3.40.50.790:FF:000001">
    <property type="entry name" value="50S ribosomal protein L1"/>
    <property type="match status" value="1"/>
</dbReference>
<dbReference type="Gene3D" id="3.30.190.20">
    <property type="match status" value="1"/>
</dbReference>
<dbReference type="Gene3D" id="3.40.50.790">
    <property type="match status" value="1"/>
</dbReference>
<dbReference type="HAMAP" id="MF_01318_B">
    <property type="entry name" value="Ribosomal_uL1_B"/>
    <property type="match status" value="1"/>
</dbReference>
<dbReference type="InterPro" id="IPR005878">
    <property type="entry name" value="Ribosom_uL1_bac-type"/>
</dbReference>
<dbReference type="InterPro" id="IPR002143">
    <property type="entry name" value="Ribosomal_uL1"/>
</dbReference>
<dbReference type="InterPro" id="IPR023674">
    <property type="entry name" value="Ribosomal_uL1-like"/>
</dbReference>
<dbReference type="InterPro" id="IPR028364">
    <property type="entry name" value="Ribosomal_uL1/biogenesis"/>
</dbReference>
<dbReference type="InterPro" id="IPR016095">
    <property type="entry name" value="Ribosomal_uL1_3-a/b-sand"/>
</dbReference>
<dbReference type="InterPro" id="IPR023673">
    <property type="entry name" value="Ribosomal_uL1_CS"/>
</dbReference>
<dbReference type="NCBIfam" id="TIGR01169">
    <property type="entry name" value="rplA_bact"/>
    <property type="match status" value="1"/>
</dbReference>
<dbReference type="PANTHER" id="PTHR36427">
    <property type="entry name" value="54S RIBOSOMAL PROTEIN L1, MITOCHONDRIAL"/>
    <property type="match status" value="1"/>
</dbReference>
<dbReference type="PANTHER" id="PTHR36427:SF3">
    <property type="entry name" value="LARGE RIBOSOMAL SUBUNIT PROTEIN UL1M"/>
    <property type="match status" value="1"/>
</dbReference>
<dbReference type="Pfam" id="PF00687">
    <property type="entry name" value="Ribosomal_L1"/>
    <property type="match status" value="1"/>
</dbReference>
<dbReference type="PIRSF" id="PIRSF002155">
    <property type="entry name" value="Ribosomal_L1"/>
    <property type="match status" value="1"/>
</dbReference>
<dbReference type="SUPFAM" id="SSF56808">
    <property type="entry name" value="Ribosomal protein L1"/>
    <property type="match status" value="1"/>
</dbReference>
<dbReference type="PROSITE" id="PS01199">
    <property type="entry name" value="RIBOSOMAL_L1"/>
    <property type="match status" value="1"/>
</dbReference>
<organism>
    <name type="scientific">Vibrio cholerae serotype O1 (strain M66-2)</name>
    <dbReference type="NCBI Taxonomy" id="579112"/>
    <lineage>
        <taxon>Bacteria</taxon>
        <taxon>Pseudomonadati</taxon>
        <taxon>Pseudomonadota</taxon>
        <taxon>Gammaproteobacteria</taxon>
        <taxon>Vibrionales</taxon>
        <taxon>Vibrionaceae</taxon>
        <taxon>Vibrio</taxon>
    </lineage>
</organism>
<comment type="function">
    <text evidence="1">Binds directly to 23S rRNA. The L1 stalk is quite mobile in the ribosome, and is involved in E site tRNA release.</text>
</comment>
<comment type="function">
    <text evidence="1">Protein L1 is also a translational repressor protein, it controls the translation of the L11 operon by binding to its mRNA.</text>
</comment>
<comment type="subunit">
    <text evidence="1">Part of the 50S ribosomal subunit.</text>
</comment>
<comment type="similarity">
    <text evidence="1">Belongs to the universal ribosomal protein uL1 family.</text>
</comment>
<feature type="chain" id="PRO_1000165710" description="Large ribosomal subunit protein uL1">
    <location>
        <begin position="1"/>
        <end position="233"/>
    </location>
</feature>
<protein>
    <recommendedName>
        <fullName evidence="1">Large ribosomal subunit protein uL1</fullName>
    </recommendedName>
    <alternativeName>
        <fullName evidence="2">50S ribosomal protein L1</fullName>
    </alternativeName>
</protein>